<gene>
    <name evidence="10" type="primary">fml1</name>
    <name evidence="14" type="ORF">SPAC9.05</name>
</gene>
<protein>
    <recommendedName>
        <fullName evidence="11">ATP-dependent DNA helicase fml1</fullName>
        <ecNumber evidence="8">3.6.4.12</ecNumber>
    </recommendedName>
    <alternativeName>
        <fullName evidence="10">FANCM-like protein 1</fullName>
    </alternativeName>
</protein>
<accession>Q9UT23</accession>
<feature type="chain" id="PRO_0000310751" description="ATP-dependent DNA helicase fml1">
    <location>
        <begin position="1"/>
        <end position="834"/>
    </location>
</feature>
<feature type="domain" description="Helicase ATP-binding" evidence="1">
    <location>
        <begin position="80"/>
        <end position="248"/>
    </location>
</feature>
<feature type="domain" description="Helicase C-terminal" evidence="2">
    <location>
        <begin position="416"/>
        <end position="582"/>
    </location>
</feature>
<feature type="region of interest" description="Interaction with MHF complex" evidence="9">
    <location>
        <begin position="650"/>
        <end position="690"/>
    </location>
</feature>
<feature type="region of interest" description="Disordered" evidence="3">
    <location>
        <begin position="738"/>
        <end position="769"/>
    </location>
</feature>
<feature type="short sequence motif" description="DEAH box" evidence="1">
    <location>
        <begin position="196"/>
        <end position="199"/>
    </location>
</feature>
<feature type="compositionally biased region" description="Basic and acidic residues" evidence="3">
    <location>
        <begin position="740"/>
        <end position="754"/>
    </location>
</feature>
<feature type="binding site" evidence="1">
    <location>
        <begin position="93"/>
        <end position="100"/>
    </location>
    <ligand>
        <name>ATP</name>
        <dbReference type="ChEBI" id="CHEBI:30616"/>
    </ligand>
</feature>
<feature type="mutagenesis site" description="Retains DNA-binding activity but is unable to unwind D loops or dissociate synthetic HJs." evidence="7 8">
    <original>K</original>
    <variation>R</variation>
    <location>
        <position position="99"/>
    </location>
</feature>
<feature type="mutagenesis site" description="Retains DNA-binding activity but is unable to unwind D loops or dissociate synthetic HJs." evidence="7 8">
    <original>D</original>
    <variation>N</variation>
    <location>
        <position position="196"/>
    </location>
</feature>
<comment type="function">
    <text evidence="5 6 7 8">ATP-dependent DNA helicase involved in DNA damage repair by homologous recombination and in genome maintenance. Capable of unwinding D-loops (PubMed:18851838, PubMed:22723423, PubMed:22844101). Plays a role in limiting crossover recombination during mitotic DNA double-strand break (DSB) repair (PubMed:18851838). Component of a FANCM-MHF complex which promotes gene conversion at blocked replication forks, probably by reversal of the stalled fork (PubMed:18851838, PubMed:20347428). FANCM-MHF also promotes non-crossover recombination in meiotic cells (PubMed:22723423).</text>
</comment>
<comment type="catalytic activity">
    <reaction evidence="8">
        <text>ATP + H2O = ADP + phosphate + H(+)</text>
        <dbReference type="Rhea" id="RHEA:13065"/>
        <dbReference type="ChEBI" id="CHEBI:15377"/>
        <dbReference type="ChEBI" id="CHEBI:15378"/>
        <dbReference type="ChEBI" id="CHEBI:30616"/>
        <dbReference type="ChEBI" id="CHEBI:43474"/>
        <dbReference type="ChEBI" id="CHEBI:456216"/>
        <dbReference type="EC" id="3.6.4.12"/>
    </reaction>
</comment>
<comment type="subcellular location">
    <subcellularLocation>
        <location evidence="4">Cytoplasm</location>
    </subcellularLocation>
    <subcellularLocation>
        <location evidence="4">Nucleus</location>
        <location evidence="4">Nucleolus</location>
    </subcellularLocation>
</comment>
<comment type="disruption phenotype">
    <text evidence="5">Hypersensitive to the alkylating agent methyl methanesulfonate (MMS) and the cross-linking agent cisplatin.</text>
</comment>
<comment type="similarity">
    <text evidence="11">Belongs to the DEAD box helicase family. DEAH subfamily. FANCM sub-subfamily.</text>
</comment>
<comment type="caution">
    <text evidence="12 13">Several phenotypes were reported for a triple-alanine mutant. However this data was retracted as several constructs contained a C-terminal deletion instead of the reported triple-alanine mutation. Following strain regeneration, although many phenotypes were not reproducible, the central observations of the publication were confirmed.</text>
</comment>
<dbReference type="EC" id="3.6.4.12" evidence="8"/>
<dbReference type="EMBL" id="CU329670">
    <property type="protein sequence ID" value="CAB57423.2"/>
    <property type="molecule type" value="Genomic_DNA"/>
</dbReference>
<dbReference type="PIR" id="T39190">
    <property type="entry name" value="T39190"/>
</dbReference>
<dbReference type="RefSeq" id="NP_593348.2">
    <property type="nucleotide sequence ID" value="NM_001018780.3"/>
</dbReference>
<dbReference type="SMR" id="Q9UT23"/>
<dbReference type="BioGRID" id="280082">
    <property type="interactions" value="54"/>
</dbReference>
<dbReference type="FunCoup" id="Q9UT23">
    <property type="interactions" value="191"/>
</dbReference>
<dbReference type="STRING" id="284812.Q9UT23"/>
<dbReference type="iPTMnet" id="Q9UT23"/>
<dbReference type="SwissPalm" id="Q9UT23"/>
<dbReference type="PaxDb" id="4896-SPAC9.05.1"/>
<dbReference type="EnsemblFungi" id="SPAC9.05.1">
    <property type="protein sequence ID" value="SPAC9.05.1:pep"/>
    <property type="gene ID" value="SPAC9.05"/>
</dbReference>
<dbReference type="GeneID" id="2543668"/>
<dbReference type="KEGG" id="spo:2543668"/>
<dbReference type="PomBase" id="SPAC9.05">
    <property type="gene designation" value="fml1"/>
</dbReference>
<dbReference type="VEuPathDB" id="FungiDB:SPAC9.05"/>
<dbReference type="eggNOG" id="KOG0354">
    <property type="taxonomic scope" value="Eukaryota"/>
</dbReference>
<dbReference type="HOGENOM" id="CLU_002513_0_2_1"/>
<dbReference type="InParanoid" id="Q9UT23"/>
<dbReference type="OMA" id="IFYEPVP"/>
<dbReference type="PhylomeDB" id="Q9UT23"/>
<dbReference type="PRO" id="PR:Q9UT23"/>
<dbReference type="Proteomes" id="UP000002485">
    <property type="component" value="Chromosome I"/>
</dbReference>
<dbReference type="GO" id="GO:0005829">
    <property type="term" value="C:cytosol"/>
    <property type="evidence" value="ECO:0007005"/>
    <property type="project" value="PomBase"/>
</dbReference>
<dbReference type="GO" id="GO:0071821">
    <property type="term" value="C:FANCM-MHF complex"/>
    <property type="evidence" value="ECO:0000250"/>
    <property type="project" value="PomBase"/>
</dbReference>
<dbReference type="GO" id="GO:0005730">
    <property type="term" value="C:nucleolus"/>
    <property type="evidence" value="ECO:0007005"/>
    <property type="project" value="PomBase"/>
</dbReference>
<dbReference type="GO" id="GO:0005634">
    <property type="term" value="C:nucleus"/>
    <property type="evidence" value="ECO:0007005"/>
    <property type="project" value="PomBase"/>
</dbReference>
<dbReference type="GO" id="GO:0035861">
    <property type="term" value="C:site of double-strand break"/>
    <property type="evidence" value="ECO:0000314"/>
    <property type="project" value="PomBase"/>
</dbReference>
<dbReference type="GO" id="GO:0043138">
    <property type="term" value="F:3'-5' DNA helicase activity"/>
    <property type="evidence" value="ECO:0000318"/>
    <property type="project" value="GO_Central"/>
</dbReference>
<dbReference type="GO" id="GO:0005524">
    <property type="term" value="F:ATP binding"/>
    <property type="evidence" value="ECO:0007669"/>
    <property type="project" value="UniProtKB-KW"/>
</dbReference>
<dbReference type="GO" id="GO:0016887">
    <property type="term" value="F:ATP hydrolysis activity"/>
    <property type="evidence" value="ECO:0007669"/>
    <property type="project" value="RHEA"/>
</dbReference>
<dbReference type="GO" id="GO:0000400">
    <property type="term" value="F:four-way junction DNA binding"/>
    <property type="evidence" value="ECO:0000314"/>
    <property type="project" value="PomBase"/>
</dbReference>
<dbReference type="GO" id="GO:0009378">
    <property type="term" value="F:four-way junction helicase activity"/>
    <property type="evidence" value="ECO:0000314"/>
    <property type="project" value="PomBase"/>
</dbReference>
<dbReference type="GO" id="GO:0000732">
    <property type="term" value="P:DNA strand displacement"/>
    <property type="evidence" value="ECO:0000314"/>
    <property type="project" value="PomBase"/>
</dbReference>
<dbReference type="GO" id="GO:0045003">
    <property type="term" value="P:double-strand break repair via synthesis-dependent strand annealing"/>
    <property type="evidence" value="ECO:0000315"/>
    <property type="project" value="PomBase"/>
</dbReference>
<dbReference type="GO" id="GO:0036297">
    <property type="term" value="P:interstrand cross-link repair"/>
    <property type="evidence" value="ECO:0000318"/>
    <property type="project" value="GO_Central"/>
</dbReference>
<dbReference type="GO" id="GO:1902346">
    <property type="term" value="P:meiotic strand displacement involved in double-strand break repair via SDSA"/>
    <property type="evidence" value="ECO:0000314"/>
    <property type="project" value="PomBase"/>
</dbReference>
<dbReference type="GO" id="GO:1903461">
    <property type="term" value="P:Okazaki fragment processing involved in mitotic DNA replication"/>
    <property type="evidence" value="ECO:0000266"/>
    <property type="project" value="PomBase"/>
</dbReference>
<dbReference type="GO" id="GO:0007131">
    <property type="term" value="P:reciprocal meiotic recombination"/>
    <property type="evidence" value="ECO:0000315"/>
    <property type="project" value="PomBase"/>
</dbReference>
<dbReference type="GO" id="GO:0036298">
    <property type="term" value="P:recombinational interstrand cross-link repair"/>
    <property type="evidence" value="ECO:0000315"/>
    <property type="project" value="PomBase"/>
</dbReference>
<dbReference type="GO" id="GO:0031297">
    <property type="term" value="P:replication fork processing"/>
    <property type="evidence" value="ECO:0000315"/>
    <property type="project" value="PomBase"/>
</dbReference>
<dbReference type="CDD" id="cd18033">
    <property type="entry name" value="DEXDc_FANCM"/>
    <property type="match status" value="1"/>
</dbReference>
<dbReference type="CDD" id="cd12091">
    <property type="entry name" value="FANCM_ID"/>
    <property type="match status" value="1"/>
</dbReference>
<dbReference type="CDD" id="cd18801">
    <property type="entry name" value="SF2_C_FANCM_Hef"/>
    <property type="match status" value="1"/>
</dbReference>
<dbReference type="FunFam" id="3.40.50.300:FF:002583">
    <property type="entry name" value="ATP-dependent DNA helicase fml1"/>
    <property type="match status" value="1"/>
</dbReference>
<dbReference type="FunFam" id="1.20.1320.20:FF:000001">
    <property type="entry name" value="Fanconi anemia, complementation group M"/>
    <property type="match status" value="1"/>
</dbReference>
<dbReference type="FunFam" id="3.40.50.300:FF:000861">
    <property type="entry name" value="Fanconi anemia, complementation group M"/>
    <property type="match status" value="1"/>
</dbReference>
<dbReference type="Gene3D" id="1.20.1320.20">
    <property type="entry name" value="hef helicase domain"/>
    <property type="match status" value="1"/>
</dbReference>
<dbReference type="Gene3D" id="3.40.50.300">
    <property type="entry name" value="P-loop containing nucleotide triphosphate hydrolases"/>
    <property type="match status" value="2"/>
</dbReference>
<dbReference type="InterPro" id="IPR011545">
    <property type="entry name" value="DEAD/DEAH_box_helicase_dom"/>
</dbReference>
<dbReference type="InterPro" id="IPR002464">
    <property type="entry name" value="DNA/RNA_helicase_DEAH_CS"/>
</dbReference>
<dbReference type="InterPro" id="IPR039686">
    <property type="entry name" value="FANCM/Mph1-like_ID"/>
</dbReference>
<dbReference type="InterPro" id="IPR044749">
    <property type="entry name" value="FANCM_DEXDc"/>
</dbReference>
<dbReference type="InterPro" id="IPR014001">
    <property type="entry name" value="Helicase_ATP-bd"/>
</dbReference>
<dbReference type="InterPro" id="IPR001650">
    <property type="entry name" value="Helicase_C-like"/>
</dbReference>
<dbReference type="InterPro" id="IPR027417">
    <property type="entry name" value="P-loop_NTPase"/>
</dbReference>
<dbReference type="PANTHER" id="PTHR14025:SF33">
    <property type="entry name" value="ATP-DEPENDENT DNA HELICASE FML1"/>
    <property type="match status" value="1"/>
</dbReference>
<dbReference type="PANTHER" id="PTHR14025">
    <property type="entry name" value="FANCONI ANEMIA GROUP M FANCM FAMILY MEMBER"/>
    <property type="match status" value="1"/>
</dbReference>
<dbReference type="Pfam" id="PF00270">
    <property type="entry name" value="DEAD"/>
    <property type="match status" value="1"/>
</dbReference>
<dbReference type="Pfam" id="PF00271">
    <property type="entry name" value="Helicase_C"/>
    <property type="match status" value="1"/>
</dbReference>
<dbReference type="SMART" id="SM00487">
    <property type="entry name" value="DEXDc"/>
    <property type="match status" value="1"/>
</dbReference>
<dbReference type="SMART" id="SM00490">
    <property type="entry name" value="HELICc"/>
    <property type="match status" value="1"/>
</dbReference>
<dbReference type="SUPFAM" id="SSF52540">
    <property type="entry name" value="P-loop containing nucleoside triphosphate hydrolases"/>
    <property type="match status" value="1"/>
</dbReference>
<dbReference type="PROSITE" id="PS00690">
    <property type="entry name" value="DEAH_ATP_HELICASE"/>
    <property type="match status" value="1"/>
</dbReference>
<dbReference type="PROSITE" id="PS51192">
    <property type="entry name" value="HELICASE_ATP_BIND_1"/>
    <property type="match status" value="1"/>
</dbReference>
<dbReference type="PROSITE" id="PS51194">
    <property type="entry name" value="HELICASE_CTER"/>
    <property type="match status" value="1"/>
</dbReference>
<organism>
    <name type="scientific">Schizosaccharomyces pombe (strain 972 / ATCC 24843)</name>
    <name type="common">Fission yeast</name>
    <dbReference type="NCBI Taxonomy" id="284812"/>
    <lineage>
        <taxon>Eukaryota</taxon>
        <taxon>Fungi</taxon>
        <taxon>Dikarya</taxon>
        <taxon>Ascomycota</taxon>
        <taxon>Taphrinomycotina</taxon>
        <taxon>Schizosaccharomycetes</taxon>
        <taxon>Schizosaccharomycetales</taxon>
        <taxon>Schizosaccharomycetaceae</taxon>
        <taxon>Schizosaccharomyces</taxon>
    </lineage>
</organism>
<evidence type="ECO:0000255" key="1">
    <source>
        <dbReference type="PROSITE-ProRule" id="PRU00541"/>
    </source>
</evidence>
<evidence type="ECO:0000255" key="2">
    <source>
        <dbReference type="PROSITE-ProRule" id="PRU00542"/>
    </source>
</evidence>
<evidence type="ECO:0000256" key="3">
    <source>
        <dbReference type="SAM" id="MobiDB-lite"/>
    </source>
</evidence>
<evidence type="ECO:0000269" key="4">
    <source>
    </source>
</evidence>
<evidence type="ECO:0000269" key="5">
    <source>
    </source>
</evidence>
<evidence type="ECO:0000269" key="6">
    <source>
    </source>
</evidence>
<evidence type="ECO:0000269" key="7">
    <source>
    </source>
</evidence>
<evidence type="ECO:0000269" key="8">
    <source>
    </source>
</evidence>
<evidence type="ECO:0000269" key="9">
    <source>
    </source>
</evidence>
<evidence type="ECO:0000303" key="10">
    <source>
    </source>
</evidence>
<evidence type="ECO:0000305" key="11"/>
<evidence type="ECO:0000305" key="12">
    <source>
    </source>
</evidence>
<evidence type="ECO:0000305" key="13">
    <source>
    </source>
</evidence>
<evidence type="ECO:0000312" key="14">
    <source>
        <dbReference type="PomBase" id="SPAC9.05"/>
    </source>
</evidence>
<proteinExistence type="evidence at protein level"/>
<keyword id="KW-0067">ATP-binding</keyword>
<keyword id="KW-0963">Cytoplasm</keyword>
<keyword id="KW-0227">DNA damage</keyword>
<keyword id="KW-0234">DNA repair</keyword>
<keyword id="KW-0238">DNA-binding</keyword>
<keyword id="KW-0347">Helicase</keyword>
<keyword id="KW-0378">Hydrolase</keyword>
<keyword id="KW-0547">Nucleotide-binding</keyword>
<keyword id="KW-0539">Nucleus</keyword>
<keyword id="KW-1185">Reference proteome</keyword>
<sequence length="834" mass="96555">MSDDSFSSDEDWDELDTQVVDKIENEYHNNTIGLNGYSVDEYFDANDSNRYRLQHELDESAAQQWVYPINVSFRDYQFNIVQKALFENVLVALPTGLGKTFIAAVVMMNYLRWFPKSYIVFMAPTKPLVTQQMEACYKITGIPKSQTAELSGHVPVTTRNQYYQSRNVFFVTPQTILNDIKHGICDRTRISCLVIDEAHRSTGNYAYVEVVHLLSLSNKNFRILALSATPGNKLEAIQNVIDSLHISRIEIRTENSIDISQYVQKKEVDFFPVDLSAEITDIRDRFSSILEPMLQKLNKGNYYRIQNAKDITSFTVVQAKQAFLAMSGQNFPANQKWDILNTFDALATFAYPLNLLLNHGIRPFYQKLREVEEECFVGRSGYKKRIINHENYRPLMDDIEILLRDQSFVGHPKLEHLERIVTEYFEKEQTKDTRIMIFVEIRSSAEEILRFLGKFYPNVRPAIFIGQSAVRKAAGMSQKLQNETVKQFQKGEVNTLIATSIGEEGLDIGEVDMIICYDASASPIRMLQRMGRTGRKRKGYIYMLLTRGKEEAKWERAKDAYRTLQDNIVSGRGLSLSEKSYRILPEKFRPVCDKRVIEIPKENEEVVVAPKKVQLRTKIKKKFFMPENALNGFITASALGKPKRALAKSEESPFEICPVTYSIEQEKKLEKYKRVCLRGLDIHRNRRLSQLSVTGRIPHSLATKSIHSFLKHLNTIDSQKAQEWRREINNQFQVSNINSTDRDTKQPKMHDFRQPLHPNPMTTLKRKGQHNSFSYDKSTLFYDNNNNLEEDLPDVNISISSRNEEASKTKPFDDRQQRLQQLVEKRKRMKGMLI</sequence>
<reference key="1">
    <citation type="journal article" date="2002" name="Nature">
        <title>The genome sequence of Schizosaccharomyces pombe.</title>
        <authorList>
            <person name="Wood V."/>
            <person name="Gwilliam R."/>
            <person name="Rajandream M.A."/>
            <person name="Lyne M.H."/>
            <person name="Lyne R."/>
            <person name="Stewart A."/>
            <person name="Sgouros J.G."/>
            <person name="Peat N."/>
            <person name="Hayles J."/>
            <person name="Baker S.G."/>
            <person name="Basham D."/>
            <person name="Bowman S."/>
            <person name="Brooks K."/>
            <person name="Brown D."/>
            <person name="Brown S."/>
            <person name="Chillingworth T."/>
            <person name="Churcher C.M."/>
            <person name="Collins M."/>
            <person name="Connor R."/>
            <person name="Cronin A."/>
            <person name="Davis P."/>
            <person name="Feltwell T."/>
            <person name="Fraser A."/>
            <person name="Gentles S."/>
            <person name="Goble A."/>
            <person name="Hamlin N."/>
            <person name="Harris D.E."/>
            <person name="Hidalgo J."/>
            <person name="Hodgson G."/>
            <person name="Holroyd S."/>
            <person name="Hornsby T."/>
            <person name="Howarth S."/>
            <person name="Huckle E.J."/>
            <person name="Hunt S."/>
            <person name="Jagels K."/>
            <person name="James K.D."/>
            <person name="Jones L."/>
            <person name="Jones M."/>
            <person name="Leather S."/>
            <person name="McDonald S."/>
            <person name="McLean J."/>
            <person name="Mooney P."/>
            <person name="Moule S."/>
            <person name="Mungall K.L."/>
            <person name="Murphy L.D."/>
            <person name="Niblett D."/>
            <person name="Odell C."/>
            <person name="Oliver K."/>
            <person name="O'Neil S."/>
            <person name="Pearson D."/>
            <person name="Quail M.A."/>
            <person name="Rabbinowitsch E."/>
            <person name="Rutherford K.M."/>
            <person name="Rutter S."/>
            <person name="Saunders D."/>
            <person name="Seeger K."/>
            <person name="Sharp S."/>
            <person name="Skelton J."/>
            <person name="Simmonds M.N."/>
            <person name="Squares R."/>
            <person name="Squares S."/>
            <person name="Stevens K."/>
            <person name="Taylor K."/>
            <person name="Taylor R.G."/>
            <person name="Tivey A."/>
            <person name="Walsh S.V."/>
            <person name="Warren T."/>
            <person name="Whitehead S."/>
            <person name="Woodward J.R."/>
            <person name="Volckaert G."/>
            <person name="Aert R."/>
            <person name="Robben J."/>
            <person name="Grymonprez B."/>
            <person name="Weltjens I."/>
            <person name="Vanstreels E."/>
            <person name="Rieger M."/>
            <person name="Schaefer M."/>
            <person name="Mueller-Auer S."/>
            <person name="Gabel C."/>
            <person name="Fuchs M."/>
            <person name="Duesterhoeft A."/>
            <person name="Fritzc C."/>
            <person name="Holzer E."/>
            <person name="Moestl D."/>
            <person name="Hilbert H."/>
            <person name="Borzym K."/>
            <person name="Langer I."/>
            <person name="Beck A."/>
            <person name="Lehrach H."/>
            <person name="Reinhardt R."/>
            <person name="Pohl T.M."/>
            <person name="Eger P."/>
            <person name="Zimmermann W."/>
            <person name="Wedler H."/>
            <person name="Wambutt R."/>
            <person name="Purnelle B."/>
            <person name="Goffeau A."/>
            <person name="Cadieu E."/>
            <person name="Dreano S."/>
            <person name="Gloux S."/>
            <person name="Lelaure V."/>
            <person name="Mottier S."/>
            <person name="Galibert F."/>
            <person name="Aves S.J."/>
            <person name="Xiang Z."/>
            <person name="Hunt C."/>
            <person name="Moore K."/>
            <person name="Hurst S.M."/>
            <person name="Lucas M."/>
            <person name="Rochet M."/>
            <person name="Gaillardin C."/>
            <person name="Tallada V.A."/>
            <person name="Garzon A."/>
            <person name="Thode G."/>
            <person name="Daga R.R."/>
            <person name="Cruzado L."/>
            <person name="Jimenez J."/>
            <person name="Sanchez M."/>
            <person name="del Rey F."/>
            <person name="Benito J."/>
            <person name="Dominguez A."/>
            <person name="Revuelta J.L."/>
            <person name="Moreno S."/>
            <person name="Armstrong J."/>
            <person name="Forsburg S.L."/>
            <person name="Cerutti L."/>
            <person name="Lowe T."/>
            <person name="McCombie W.R."/>
            <person name="Paulsen I."/>
            <person name="Potashkin J."/>
            <person name="Shpakovski G.V."/>
            <person name="Ussery D."/>
            <person name="Barrell B.G."/>
            <person name="Nurse P."/>
        </authorList>
    </citation>
    <scope>NUCLEOTIDE SEQUENCE [LARGE SCALE GENOMIC DNA]</scope>
    <source>
        <strain>972 / ATCC 24843</strain>
    </source>
</reference>
<reference key="2">
    <citation type="journal article" date="2006" name="Nat. Biotechnol.">
        <title>ORFeome cloning and global analysis of protein localization in the fission yeast Schizosaccharomyces pombe.</title>
        <authorList>
            <person name="Matsuyama A."/>
            <person name="Arai R."/>
            <person name="Yashiroda Y."/>
            <person name="Shirai A."/>
            <person name="Kamata A."/>
            <person name="Sekido S."/>
            <person name="Kobayashi Y."/>
            <person name="Hashimoto A."/>
            <person name="Hamamoto M."/>
            <person name="Hiraoka Y."/>
            <person name="Horinouchi S."/>
            <person name="Yoshida M."/>
        </authorList>
    </citation>
    <scope>SUBCELLULAR LOCATION [LARGE SCALE ANALYSIS]</scope>
</reference>
<reference key="3">
    <citation type="journal article" date="2008" name="Mol. Cell">
        <title>The FANCM ortholog Fml1 promotes recombination at stalled replication forks and limits crossing over during DNA double-strand break repair.</title>
        <authorList>
            <person name="Sun W."/>
            <person name="Nandi S."/>
            <person name="Osman F."/>
            <person name="Ahn J.S."/>
            <person name="Jakovleska J."/>
            <person name="Lorenz A."/>
            <person name="Whitby M.C."/>
        </authorList>
    </citation>
    <scope>FUNCTION</scope>
    <scope>DISRUPTION PHENOTYPE</scope>
</reference>
<reference key="4">
    <citation type="journal article" date="2010" name="Mol. Cell">
        <title>A histone-fold complex and FANCM form a conserved DNA-remodeling complex to maintain genome stability.</title>
        <authorList>
            <person name="Yan Z."/>
            <person name="Delannoy M."/>
            <person name="Ling C."/>
            <person name="Daee D."/>
            <person name="Osman F."/>
            <person name="Muniandy P.A."/>
            <person name="Shen X."/>
            <person name="Oostra A.B."/>
            <person name="Du H."/>
            <person name="Steltenpool J."/>
            <person name="Lin T."/>
            <person name="Schuster B."/>
            <person name="Decaillet C."/>
            <person name="Stasiak A."/>
            <person name="Stasiak A.Z."/>
            <person name="Stone S."/>
            <person name="Hoatlin M.E."/>
            <person name="Schindler D."/>
            <person name="Woodcock C.L."/>
            <person name="Joenje H."/>
            <person name="Sen R."/>
            <person name="de Winter J.P."/>
            <person name="Li L."/>
            <person name="Seidman M.M."/>
            <person name="Whitby M.C."/>
            <person name="Myung K."/>
            <person name="Constantinousend A."/>
            <person name="Wang W."/>
        </authorList>
    </citation>
    <scope>FUNCTION</scope>
</reference>
<reference key="5">
    <citation type="journal article" date="2012" name="Nucleic Acids Res.">
        <title>The ATPase activity of Fml1 is essential for its roles in homologous recombination and DNA repair.</title>
        <authorList>
            <person name="Nandi S."/>
            <person name="Whitby M.C."/>
        </authorList>
    </citation>
    <scope>FUNCTION</scope>
    <scope>CATALYTIC ACTIVITY</scope>
    <scope>MUTAGENESIS OF LYS-99 AND ASP-196</scope>
</reference>
<reference key="6">
    <citation type="journal article" date="2012" name="Science">
        <title>The fission yeast FANCM ortholog directs non-crossover recombination during meiosis.</title>
        <authorList>
            <person name="Lorenz A."/>
            <person name="Osman F."/>
            <person name="Sun W."/>
            <person name="Nandi S."/>
            <person name="Steinacher R."/>
            <person name="Whitby M.C."/>
        </authorList>
    </citation>
    <scope>FUNCTION</scope>
    <scope>MUTAGENESIS OF LYS-99 AND ASP-196</scope>
</reference>
<reference key="7">
    <citation type="journal article" date="2013" name="Open Biol.">
        <title>MHF1-2/CENP-S-X performs distinct roles in centromere metabolism and genetic recombination.</title>
        <authorList>
            <person name="Bhattacharjee S."/>
            <person name="Osman F."/>
            <person name="Feeney L."/>
            <person name="Lorenz A."/>
            <person name="Bryer C."/>
            <person name="Whitby M.C."/>
        </authorList>
    </citation>
    <scope>RETRACTED PAPER</scope>
</reference>
<reference key="8">
    <citation type="journal article" date="2018" name="Open Biol.">
        <authorList>
            <person name="Bhattacharjee S."/>
            <person name="Osman F."/>
            <person name="Feeney L."/>
            <person name="Lorenz A."/>
            <person name="Bryer C."/>
            <person name="Whitby M.C."/>
        </authorList>
    </citation>
    <scope>RETRACTION NOTICE OF PUBMED:24026537</scope>
</reference>
<name>MPH1_SCHPO</name>